<dbReference type="EC" id="2.1.2.9" evidence="1"/>
<dbReference type="EMBL" id="CP000736">
    <property type="protein sequence ID" value="ABR52153.1"/>
    <property type="molecule type" value="Genomic_DNA"/>
</dbReference>
<dbReference type="SMR" id="A6U135"/>
<dbReference type="KEGG" id="sah:SaurJH1_1300"/>
<dbReference type="HOGENOM" id="CLU_033347_1_1_9"/>
<dbReference type="GO" id="GO:0005829">
    <property type="term" value="C:cytosol"/>
    <property type="evidence" value="ECO:0007669"/>
    <property type="project" value="TreeGrafter"/>
</dbReference>
<dbReference type="GO" id="GO:0004479">
    <property type="term" value="F:methionyl-tRNA formyltransferase activity"/>
    <property type="evidence" value="ECO:0007669"/>
    <property type="project" value="UniProtKB-UniRule"/>
</dbReference>
<dbReference type="CDD" id="cd08646">
    <property type="entry name" value="FMT_core_Met-tRNA-FMT_N"/>
    <property type="match status" value="1"/>
</dbReference>
<dbReference type="CDD" id="cd08704">
    <property type="entry name" value="Met_tRNA_FMT_C"/>
    <property type="match status" value="1"/>
</dbReference>
<dbReference type="FunFam" id="3.40.50.12230:FF:000001">
    <property type="entry name" value="Methionyl-tRNA formyltransferase"/>
    <property type="match status" value="1"/>
</dbReference>
<dbReference type="FunFam" id="3.40.50.170:FF:000004">
    <property type="entry name" value="Methionyl-tRNA formyltransferase"/>
    <property type="match status" value="1"/>
</dbReference>
<dbReference type="Gene3D" id="3.10.25.10">
    <property type="entry name" value="Formyl transferase, C-terminal domain"/>
    <property type="match status" value="1"/>
</dbReference>
<dbReference type="Gene3D" id="3.40.50.170">
    <property type="entry name" value="Formyl transferase, N-terminal domain"/>
    <property type="match status" value="1"/>
</dbReference>
<dbReference type="HAMAP" id="MF_00182">
    <property type="entry name" value="Formyl_trans"/>
    <property type="match status" value="1"/>
</dbReference>
<dbReference type="InterPro" id="IPR005794">
    <property type="entry name" value="Fmt"/>
</dbReference>
<dbReference type="InterPro" id="IPR005793">
    <property type="entry name" value="Formyl_trans_C"/>
</dbReference>
<dbReference type="InterPro" id="IPR037022">
    <property type="entry name" value="Formyl_trans_C_sf"/>
</dbReference>
<dbReference type="InterPro" id="IPR002376">
    <property type="entry name" value="Formyl_transf_N"/>
</dbReference>
<dbReference type="InterPro" id="IPR036477">
    <property type="entry name" value="Formyl_transf_N_sf"/>
</dbReference>
<dbReference type="InterPro" id="IPR011034">
    <property type="entry name" value="Formyl_transferase-like_C_sf"/>
</dbReference>
<dbReference type="InterPro" id="IPR001555">
    <property type="entry name" value="GART_AS"/>
</dbReference>
<dbReference type="InterPro" id="IPR044135">
    <property type="entry name" value="Met-tRNA-FMT_C"/>
</dbReference>
<dbReference type="InterPro" id="IPR041711">
    <property type="entry name" value="Met-tRNA-FMT_N"/>
</dbReference>
<dbReference type="NCBIfam" id="TIGR00460">
    <property type="entry name" value="fmt"/>
    <property type="match status" value="1"/>
</dbReference>
<dbReference type="PANTHER" id="PTHR11138">
    <property type="entry name" value="METHIONYL-TRNA FORMYLTRANSFERASE"/>
    <property type="match status" value="1"/>
</dbReference>
<dbReference type="PANTHER" id="PTHR11138:SF5">
    <property type="entry name" value="METHIONYL-TRNA FORMYLTRANSFERASE, MITOCHONDRIAL"/>
    <property type="match status" value="1"/>
</dbReference>
<dbReference type="Pfam" id="PF02911">
    <property type="entry name" value="Formyl_trans_C"/>
    <property type="match status" value="1"/>
</dbReference>
<dbReference type="Pfam" id="PF00551">
    <property type="entry name" value="Formyl_trans_N"/>
    <property type="match status" value="1"/>
</dbReference>
<dbReference type="SUPFAM" id="SSF50486">
    <property type="entry name" value="FMT C-terminal domain-like"/>
    <property type="match status" value="1"/>
</dbReference>
<dbReference type="SUPFAM" id="SSF53328">
    <property type="entry name" value="Formyltransferase"/>
    <property type="match status" value="1"/>
</dbReference>
<dbReference type="PROSITE" id="PS00373">
    <property type="entry name" value="GART"/>
    <property type="match status" value="1"/>
</dbReference>
<gene>
    <name evidence="1" type="primary">fmt</name>
    <name type="ordered locus">SaurJH1_1300</name>
</gene>
<proteinExistence type="inferred from homology"/>
<reference key="1">
    <citation type="submission" date="2007-06" db="EMBL/GenBank/DDBJ databases">
        <title>Complete sequence of chromosome of Staphylococcus aureus subsp. aureus JH1.</title>
        <authorList>
            <consortium name="US DOE Joint Genome Institute"/>
            <person name="Copeland A."/>
            <person name="Lucas S."/>
            <person name="Lapidus A."/>
            <person name="Barry K."/>
            <person name="Detter J.C."/>
            <person name="Glavina del Rio T."/>
            <person name="Hammon N."/>
            <person name="Israni S."/>
            <person name="Dalin E."/>
            <person name="Tice H."/>
            <person name="Pitluck S."/>
            <person name="Chain P."/>
            <person name="Malfatti S."/>
            <person name="Shin M."/>
            <person name="Vergez L."/>
            <person name="Schmutz J."/>
            <person name="Larimer F."/>
            <person name="Land M."/>
            <person name="Hauser L."/>
            <person name="Kyrpides N."/>
            <person name="Ivanova N."/>
            <person name="Tomasz A."/>
            <person name="Richardson P."/>
        </authorList>
    </citation>
    <scope>NUCLEOTIDE SEQUENCE [LARGE SCALE GENOMIC DNA]</scope>
    <source>
        <strain>JH1</strain>
    </source>
</reference>
<accession>A6U135</accession>
<comment type="function">
    <text evidence="1">Attaches a formyl group to the free amino group of methionyl-tRNA(fMet). The formyl group appears to play a dual role in the initiator identity of N-formylmethionyl-tRNA by promoting its recognition by IF2 and preventing the misappropriation of this tRNA by the elongation apparatus.</text>
</comment>
<comment type="catalytic activity">
    <reaction evidence="1">
        <text>L-methionyl-tRNA(fMet) + (6R)-10-formyltetrahydrofolate = N-formyl-L-methionyl-tRNA(fMet) + (6S)-5,6,7,8-tetrahydrofolate + H(+)</text>
        <dbReference type="Rhea" id="RHEA:24380"/>
        <dbReference type="Rhea" id="RHEA-COMP:9952"/>
        <dbReference type="Rhea" id="RHEA-COMP:9953"/>
        <dbReference type="ChEBI" id="CHEBI:15378"/>
        <dbReference type="ChEBI" id="CHEBI:57453"/>
        <dbReference type="ChEBI" id="CHEBI:78530"/>
        <dbReference type="ChEBI" id="CHEBI:78844"/>
        <dbReference type="ChEBI" id="CHEBI:195366"/>
        <dbReference type="EC" id="2.1.2.9"/>
    </reaction>
</comment>
<comment type="similarity">
    <text evidence="1">Belongs to the Fmt family.</text>
</comment>
<keyword id="KW-0648">Protein biosynthesis</keyword>
<keyword id="KW-0808">Transferase</keyword>
<sequence>MTKIIFMGTPDFSTTVLEMLIAEHDVIAVVTQPDRPVGRKRVMTPPPVKKVAMKYDLPVYQPEKLSGSEELEQLLQLDVDLIVTAAFGQLLPESLLALPKLGAINVHASLLPKYRGGAPIHQAIIDGEQETGITIMYMVKKLDAGNIISQQAIKIEENDNVGTMHDKLSVLGADLLKETLPSIIEGTNESVPQDDTQATFASNIRREDERISWNKPGRQVFNQIRGLSPWPVAYTTMDDTNLKIYDAELVETNKINEPGTIIETTKKAIIVATNDNEAVAIKDMQLAGKKRMLAANYLSGAQNTLVGKKLI</sequence>
<name>FMT_STAA2</name>
<evidence type="ECO:0000255" key="1">
    <source>
        <dbReference type="HAMAP-Rule" id="MF_00182"/>
    </source>
</evidence>
<feature type="chain" id="PRO_1000077325" description="Methionyl-tRNA formyltransferase">
    <location>
        <begin position="1"/>
        <end position="311"/>
    </location>
</feature>
<feature type="binding site" evidence="1">
    <location>
        <begin position="109"/>
        <end position="112"/>
    </location>
    <ligand>
        <name>(6S)-5,6,7,8-tetrahydrofolate</name>
        <dbReference type="ChEBI" id="CHEBI:57453"/>
    </ligand>
</feature>
<protein>
    <recommendedName>
        <fullName evidence="1">Methionyl-tRNA formyltransferase</fullName>
        <ecNumber evidence="1">2.1.2.9</ecNumber>
    </recommendedName>
</protein>
<organism>
    <name type="scientific">Staphylococcus aureus (strain JH1)</name>
    <dbReference type="NCBI Taxonomy" id="359787"/>
    <lineage>
        <taxon>Bacteria</taxon>
        <taxon>Bacillati</taxon>
        <taxon>Bacillota</taxon>
        <taxon>Bacilli</taxon>
        <taxon>Bacillales</taxon>
        <taxon>Staphylococcaceae</taxon>
        <taxon>Staphylococcus</taxon>
    </lineage>
</organism>